<name>YIDC_PARPJ</name>
<feature type="chain" id="PRO_1000187644" description="Membrane protein insertase YidC">
    <location>
        <begin position="1"/>
        <end position="552"/>
    </location>
</feature>
<feature type="transmembrane region" description="Helical" evidence="1">
    <location>
        <begin position="3"/>
        <end position="23"/>
    </location>
</feature>
<feature type="transmembrane region" description="Helical" evidence="1">
    <location>
        <begin position="364"/>
        <end position="384"/>
    </location>
</feature>
<feature type="transmembrane region" description="Helical" evidence="1">
    <location>
        <begin position="430"/>
        <end position="450"/>
    </location>
</feature>
<feature type="transmembrane region" description="Helical" evidence="1">
    <location>
        <begin position="504"/>
        <end position="524"/>
    </location>
</feature>
<feature type="region of interest" description="Disordered" evidence="2">
    <location>
        <begin position="35"/>
        <end position="59"/>
    </location>
</feature>
<feature type="compositionally biased region" description="Low complexity" evidence="2">
    <location>
        <begin position="42"/>
        <end position="59"/>
    </location>
</feature>
<reference key="1">
    <citation type="journal article" date="2011" name="J. Bacteriol.">
        <title>Complete genome sequence of the plant growth-promoting endophyte Burkholderia phytofirmans strain PsJN.</title>
        <authorList>
            <person name="Weilharter A."/>
            <person name="Mitter B."/>
            <person name="Shin M.V."/>
            <person name="Chain P.S."/>
            <person name="Nowak J."/>
            <person name="Sessitsch A."/>
        </authorList>
    </citation>
    <scope>NUCLEOTIDE SEQUENCE [LARGE SCALE GENOMIC DNA]</scope>
    <source>
        <strain>DSM 17436 / LMG 22146 / PsJN</strain>
    </source>
</reference>
<keyword id="KW-0997">Cell inner membrane</keyword>
<keyword id="KW-1003">Cell membrane</keyword>
<keyword id="KW-0143">Chaperone</keyword>
<keyword id="KW-0472">Membrane</keyword>
<keyword id="KW-0653">Protein transport</keyword>
<keyword id="KW-0812">Transmembrane</keyword>
<keyword id="KW-1133">Transmembrane helix</keyword>
<keyword id="KW-0813">Transport</keyword>
<gene>
    <name evidence="1" type="primary">yidC</name>
    <name type="ordered locus">Bphyt_3986</name>
</gene>
<accession>B2T7U1</accession>
<dbReference type="EMBL" id="CP001052">
    <property type="protein sequence ID" value="ACD18372.1"/>
    <property type="molecule type" value="Genomic_DNA"/>
</dbReference>
<dbReference type="RefSeq" id="WP_012434887.1">
    <property type="nucleotide sequence ID" value="NC_010681.1"/>
</dbReference>
<dbReference type="SMR" id="B2T7U1"/>
<dbReference type="STRING" id="398527.Bphyt_3986"/>
<dbReference type="KEGG" id="bpy:Bphyt_3986"/>
<dbReference type="eggNOG" id="COG0706">
    <property type="taxonomic scope" value="Bacteria"/>
</dbReference>
<dbReference type="HOGENOM" id="CLU_016535_3_0_4"/>
<dbReference type="OrthoDB" id="9780552at2"/>
<dbReference type="Proteomes" id="UP000001739">
    <property type="component" value="Chromosome 1"/>
</dbReference>
<dbReference type="GO" id="GO:0005886">
    <property type="term" value="C:plasma membrane"/>
    <property type="evidence" value="ECO:0007669"/>
    <property type="project" value="UniProtKB-SubCell"/>
</dbReference>
<dbReference type="GO" id="GO:0032977">
    <property type="term" value="F:membrane insertase activity"/>
    <property type="evidence" value="ECO:0007669"/>
    <property type="project" value="InterPro"/>
</dbReference>
<dbReference type="GO" id="GO:0051205">
    <property type="term" value="P:protein insertion into membrane"/>
    <property type="evidence" value="ECO:0007669"/>
    <property type="project" value="TreeGrafter"/>
</dbReference>
<dbReference type="GO" id="GO:0015031">
    <property type="term" value="P:protein transport"/>
    <property type="evidence" value="ECO:0007669"/>
    <property type="project" value="UniProtKB-KW"/>
</dbReference>
<dbReference type="CDD" id="cd20070">
    <property type="entry name" value="5TM_YidC_Alb3"/>
    <property type="match status" value="1"/>
</dbReference>
<dbReference type="CDD" id="cd19961">
    <property type="entry name" value="EcYidC-like_peri"/>
    <property type="match status" value="1"/>
</dbReference>
<dbReference type="Gene3D" id="2.70.98.90">
    <property type="match status" value="1"/>
</dbReference>
<dbReference type="HAMAP" id="MF_01810">
    <property type="entry name" value="YidC_type1"/>
    <property type="match status" value="1"/>
</dbReference>
<dbReference type="InterPro" id="IPR019998">
    <property type="entry name" value="Membr_insert_YidC"/>
</dbReference>
<dbReference type="InterPro" id="IPR028053">
    <property type="entry name" value="Membr_insert_YidC_N"/>
</dbReference>
<dbReference type="InterPro" id="IPR001708">
    <property type="entry name" value="YidC/ALB3/OXA1/COX18"/>
</dbReference>
<dbReference type="InterPro" id="IPR028055">
    <property type="entry name" value="YidC/Oxa/ALB_C"/>
</dbReference>
<dbReference type="InterPro" id="IPR047196">
    <property type="entry name" value="YidC_ALB_C"/>
</dbReference>
<dbReference type="InterPro" id="IPR038221">
    <property type="entry name" value="YidC_periplasmic_sf"/>
</dbReference>
<dbReference type="NCBIfam" id="NF002352">
    <property type="entry name" value="PRK01318.1-3"/>
    <property type="match status" value="1"/>
</dbReference>
<dbReference type="NCBIfam" id="NF002353">
    <property type="entry name" value="PRK01318.1-4"/>
    <property type="match status" value="1"/>
</dbReference>
<dbReference type="NCBIfam" id="TIGR03593">
    <property type="entry name" value="yidC_nterm"/>
    <property type="match status" value="1"/>
</dbReference>
<dbReference type="NCBIfam" id="TIGR03592">
    <property type="entry name" value="yidC_oxa1_cterm"/>
    <property type="match status" value="1"/>
</dbReference>
<dbReference type="PANTHER" id="PTHR12428:SF65">
    <property type="entry name" value="CYTOCHROME C OXIDASE ASSEMBLY PROTEIN COX18, MITOCHONDRIAL"/>
    <property type="match status" value="1"/>
</dbReference>
<dbReference type="PANTHER" id="PTHR12428">
    <property type="entry name" value="OXA1"/>
    <property type="match status" value="1"/>
</dbReference>
<dbReference type="Pfam" id="PF02096">
    <property type="entry name" value="60KD_IMP"/>
    <property type="match status" value="1"/>
</dbReference>
<dbReference type="Pfam" id="PF14849">
    <property type="entry name" value="YidC_periplas"/>
    <property type="match status" value="1"/>
</dbReference>
<dbReference type="PRINTS" id="PR00701">
    <property type="entry name" value="60KDINNERMP"/>
</dbReference>
<dbReference type="PRINTS" id="PR01900">
    <property type="entry name" value="YIDCPROTEIN"/>
</dbReference>
<sequence>MDIKRTVLWVIFFMSAVMLFDNWQRDHGRPSMFFPSATPTKTVGSAAPGTTTPGTQPADLPATNAAAPGNAPAATQSQLVKFNTDVYSGEIDTRGGTLSKLSLVNKGDGKQPDLVITLFDRTANHTYLARTGLLGGDFPNHNDIYTPLPNQQHDLTGDEKSFQLSFESPVKGGVKVIKTYTFTRGSYVIGVDTKIQNVGTAPVTPSVYMELVRDDQPVETPRFSHTFIGPAVYTDQHHFQKMTFGDIDKNKQDYATSADNGWIAMVQHYFASAWIPQQGVKRDIYVEKIDPALYRVGVKEPVPTIAPGQTVDVSARLFAGPEEERMLEGIAPGLELVKDYGWVTIIAKPLFWLLEKIHSYVGNWGWSIVLLTLLIKAVFFPLSAASYKSMARMKAITPRMQALRERFKGDPQKMNSALMELYKTEKVNPFGGCLPVVIQIPVFISLYWVLLSSVEMRGAPWILWIHDLSQQDPFFILPVLMAVSMFLQTKLNPTPPDPVQAKMMMFMPIAFSVMFFFFPAGLVLYYVVNNVLSIAQQYYITRMMGQTKAKAA</sequence>
<protein>
    <recommendedName>
        <fullName evidence="1">Membrane protein insertase YidC</fullName>
    </recommendedName>
    <alternativeName>
        <fullName evidence="1">Foldase YidC</fullName>
    </alternativeName>
    <alternativeName>
        <fullName evidence="1">Membrane integrase YidC</fullName>
    </alternativeName>
    <alternativeName>
        <fullName evidence="1">Membrane protein YidC</fullName>
    </alternativeName>
</protein>
<proteinExistence type="inferred from homology"/>
<comment type="function">
    <text evidence="1">Required for the insertion and/or proper folding and/or complex formation of integral membrane proteins into the membrane. Involved in integration of membrane proteins that insert both dependently and independently of the Sec translocase complex, as well as at least some lipoproteins. Aids folding of multispanning membrane proteins.</text>
</comment>
<comment type="subunit">
    <text evidence="1">Interacts with the Sec translocase complex via SecD. Specifically interacts with transmembrane segments of nascent integral membrane proteins during membrane integration.</text>
</comment>
<comment type="subcellular location">
    <subcellularLocation>
        <location evidence="1">Cell inner membrane</location>
        <topology evidence="1">Multi-pass membrane protein</topology>
    </subcellularLocation>
</comment>
<comment type="similarity">
    <text evidence="1">Belongs to the OXA1/ALB3/YidC family. Type 1 subfamily.</text>
</comment>
<evidence type="ECO:0000255" key="1">
    <source>
        <dbReference type="HAMAP-Rule" id="MF_01810"/>
    </source>
</evidence>
<evidence type="ECO:0000256" key="2">
    <source>
        <dbReference type="SAM" id="MobiDB-lite"/>
    </source>
</evidence>
<organism>
    <name type="scientific">Paraburkholderia phytofirmans (strain DSM 17436 / LMG 22146 / PsJN)</name>
    <name type="common">Burkholderia phytofirmans</name>
    <dbReference type="NCBI Taxonomy" id="398527"/>
    <lineage>
        <taxon>Bacteria</taxon>
        <taxon>Pseudomonadati</taxon>
        <taxon>Pseudomonadota</taxon>
        <taxon>Betaproteobacteria</taxon>
        <taxon>Burkholderiales</taxon>
        <taxon>Burkholderiaceae</taxon>
        <taxon>Paraburkholderia</taxon>
    </lineage>
</organism>